<name>RSXC_ECO55</name>
<sequence length="708" mass="76739">MLKLFSAFRKNKIWDFNGGIHPPEMKTQSNGTPLRQVPLAQRFVIPLKQHIGAEGELCVSVGDKVLRGQPLTRGRGKMLPVHAPTSGTVTAIAPHSTAHPSALAELSVIIDADGEDCWIPRDGWADYRTRSREELIERIHQFGVAGLGGAGFPTGVKLQGGGDKIETLIINAAECEPYITADDRLMQDCAAQVVEGIRILAHILQPREILIGIEDNKPQAISMLRAVLADSNDISLRVIPTKYPSGGAKQLTYILTGKQVPHGGRSSDIGVLMQNVGTAYAVKRAVIDGEPITERVVTLTGEAIARPGNVWARLGTPVRHLLNDAGFCPSADQMVIMGGPLMGFTLPWLDVPVVKITNCLLAPSANELGEPQEEQSCIRCSACADACPADLLPQQLYWFSKGQQHDKATTHNIADCIECGACAWVCPSNIPLVQYFRQEKAEIAAIRQEEKRAAEAKARFEARQARLEREKAARLERHKSAAVQPAAKDKDAIAAALARVKEKQAQATQPIVIKAGERPDNSAIIAAREARKAQARAKQAELQQTNDAATVADPRKTAVEAAIARAKARKLEQQQANAEPEEQVDPRKAAVEAAIARAKARKLEQQQSNAEPEEQVDPRKAAVEAAIARAKARKLEQQQANAEPEEQVDPRKAAVEAAIARAKARKLEQQQTNAEPEEQVDPRKAAVAAAIARAQAKKAAQQKVVNED</sequence>
<organism>
    <name type="scientific">Escherichia coli (strain 55989 / EAEC)</name>
    <dbReference type="NCBI Taxonomy" id="585055"/>
    <lineage>
        <taxon>Bacteria</taxon>
        <taxon>Pseudomonadati</taxon>
        <taxon>Pseudomonadota</taxon>
        <taxon>Gammaproteobacteria</taxon>
        <taxon>Enterobacterales</taxon>
        <taxon>Enterobacteriaceae</taxon>
        <taxon>Escherichia</taxon>
    </lineage>
</organism>
<gene>
    <name evidence="1" type="primary">rsxC</name>
    <name type="ordered locus">EC55989_1797</name>
</gene>
<protein>
    <recommendedName>
        <fullName evidence="1">Ion-translocating oxidoreductase complex subunit C</fullName>
        <ecNumber evidence="1">7.-.-.-</ecNumber>
    </recommendedName>
    <alternativeName>
        <fullName evidence="1">Rsx electron transport complex subunit C</fullName>
    </alternativeName>
</protein>
<dbReference type="EC" id="7.-.-.-" evidence="1"/>
<dbReference type="EMBL" id="CU928145">
    <property type="protein sequence ID" value="CAU97649.1"/>
    <property type="molecule type" value="Genomic_DNA"/>
</dbReference>
<dbReference type="RefSeq" id="WP_000915770.1">
    <property type="nucleotide sequence ID" value="NC_011748.1"/>
</dbReference>
<dbReference type="SMR" id="B7L5I2"/>
<dbReference type="KEGG" id="eck:EC55989_1797"/>
<dbReference type="HOGENOM" id="CLU_010808_2_1_6"/>
<dbReference type="Proteomes" id="UP000000746">
    <property type="component" value="Chromosome"/>
</dbReference>
<dbReference type="GO" id="GO:0005886">
    <property type="term" value="C:plasma membrane"/>
    <property type="evidence" value="ECO:0007669"/>
    <property type="project" value="UniProtKB-SubCell"/>
</dbReference>
<dbReference type="GO" id="GO:0051539">
    <property type="term" value="F:4 iron, 4 sulfur cluster binding"/>
    <property type="evidence" value="ECO:0007669"/>
    <property type="project" value="UniProtKB-KW"/>
</dbReference>
<dbReference type="GO" id="GO:0009055">
    <property type="term" value="F:electron transfer activity"/>
    <property type="evidence" value="ECO:0007669"/>
    <property type="project" value="InterPro"/>
</dbReference>
<dbReference type="GO" id="GO:0046872">
    <property type="term" value="F:metal ion binding"/>
    <property type="evidence" value="ECO:0007669"/>
    <property type="project" value="UniProtKB-KW"/>
</dbReference>
<dbReference type="GO" id="GO:0022900">
    <property type="term" value="P:electron transport chain"/>
    <property type="evidence" value="ECO:0007669"/>
    <property type="project" value="UniProtKB-UniRule"/>
</dbReference>
<dbReference type="Gene3D" id="3.30.70.20">
    <property type="match status" value="1"/>
</dbReference>
<dbReference type="Gene3D" id="3.40.50.11540">
    <property type="entry name" value="NADH-ubiquinone oxidoreductase 51kDa subunit"/>
    <property type="match status" value="1"/>
</dbReference>
<dbReference type="HAMAP" id="MF_00461">
    <property type="entry name" value="RsxC_RnfC"/>
    <property type="match status" value="1"/>
</dbReference>
<dbReference type="InterPro" id="IPR017896">
    <property type="entry name" value="4Fe4S_Fe-S-bd"/>
</dbReference>
<dbReference type="InterPro" id="IPR017900">
    <property type="entry name" value="4Fe4S_Fe_S_CS"/>
</dbReference>
<dbReference type="InterPro" id="IPR010208">
    <property type="entry name" value="Ion_transpt_RnfC/RsxC"/>
</dbReference>
<dbReference type="InterPro" id="IPR011538">
    <property type="entry name" value="Nuo51_FMN-bd"/>
</dbReference>
<dbReference type="InterPro" id="IPR037225">
    <property type="entry name" value="Nuo51_FMN-bd_sf"/>
</dbReference>
<dbReference type="InterPro" id="IPR026902">
    <property type="entry name" value="RnfC_N"/>
</dbReference>
<dbReference type="InterPro" id="IPR019554">
    <property type="entry name" value="Soluble_ligand-bd"/>
</dbReference>
<dbReference type="NCBIfam" id="NF003454">
    <property type="entry name" value="PRK05035.1"/>
    <property type="match status" value="1"/>
</dbReference>
<dbReference type="NCBIfam" id="TIGR01945">
    <property type="entry name" value="rnfC"/>
    <property type="match status" value="1"/>
</dbReference>
<dbReference type="PANTHER" id="PTHR43034">
    <property type="entry name" value="ION-TRANSLOCATING OXIDOREDUCTASE COMPLEX SUBUNIT C"/>
    <property type="match status" value="1"/>
</dbReference>
<dbReference type="PANTHER" id="PTHR43034:SF2">
    <property type="entry name" value="ION-TRANSLOCATING OXIDOREDUCTASE COMPLEX SUBUNIT C"/>
    <property type="match status" value="1"/>
</dbReference>
<dbReference type="Pfam" id="PF01512">
    <property type="entry name" value="Complex1_51K"/>
    <property type="match status" value="1"/>
</dbReference>
<dbReference type="Pfam" id="PF12838">
    <property type="entry name" value="Fer4_7"/>
    <property type="match status" value="1"/>
</dbReference>
<dbReference type="Pfam" id="PF13375">
    <property type="entry name" value="RnfC_N"/>
    <property type="match status" value="1"/>
</dbReference>
<dbReference type="Pfam" id="PF10531">
    <property type="entry name" value="SLBB"/>
    <property type="match status" value="1"/>
</dbReference>
<dbReference type="SUPFAM" id="SSF46548">
    <property type="entry name" value="alpha-helical ferredoxin"/>
    <property type="match status" value="1"/>
</dbReference>
<dbReference type="SUPFAM" id="SSF142019">
    <property type="entry name" value="Nqo1 FMN-binding domain-like"/>
    <property type="match status" value="1"/>
</dbReference>
<dbReference type="PROSITE" id="PS00198">
    <property type="entry name" value="4FE4S_FER_1"/>
    <property type="match status" value="2"/>
</dbReference>
<dbReference type="PROSITE" id="PS51379">
    <property type="entry name" value="4FE4S_FER_2"/>
    <property type="match status" value="2"/>
</dbReference>
<evidence type="ECO:0000255" key="1">
    <source>
        <dbReference type="HAMAP-Rule" id="MF_00461"/>
    </source>
</evidence>
<evidence type="ECO:0000256" key="2">
    <source>
        <dbReference type="SAM" id="MobiDB-lite"/>
    </source>
</evidence>
<accession>B7L5I2</accession>
<proteinExistence type="inferred from homology"/>
<reference key="1">
    <citation type="journal article" date="2009" name="PLoS Genet.">
        <title>Organised genome dynamics in the Escherichia coli species results in highly diverse adaptive paths.</title>
        <authorList>
            <person name="Touchon M."/>
            <person name="Hoede C."/>
            <person name="Tenaillon O."/>
            <person name="Barbe V."/>
            <person name="Baeriswyl S."/>
            <person name="Bidet P."/>
            <person name="Bingen E."/>
            <person name="Bonacorsi S."/>
            <person name="Bouchier C."/>
            <person name="Bouvet O."/>
            <person name="Calteau A."/>
            <person name="Chiapello H."/>
            <person name="Clermont O."/>
            <person name="Cruveiller S."/>
            <person name="Danchin A."/>
            <person name="Diard M."/>
            <person name="Dossat C."/>
            <person name="Karoui M.E."/>
            <person name="Frapy E."/>
            <person name="Garry L."/>
            <person name="Ghigo J.M."/>
            <person name="Gilles A.M."/>
            <person name="Johnson J."/>
            <person name="Le Bouguenec C."/>
            <person name="Lescat M."/>
            <person name="Mangenot S."/>
            <person name="Martinez-Jehanne V."/>
            <person name="Matic I."/>
            <person name="Nassif X."/>
            <person name="Oztas S."/>
            <person name="Petit M.A."/>
            <person name="Pichon C."/>
            <person name="Rouy Z."/>
            <person name="Ruf C.S."/>
            <person name="Schneider D."/>
            <person name="Tourret J."/>
            <person name="Vacherie B."/>
            <person name="Vallenet D."/>
            <person name="Medigue C."/>
            <person name="Rocha E.P.C."/>
            <person name="Denamur E."/>
        </authorList>
    </citation>
    <scope>NUCLEOTIDE SEQUENCE [LARGE SCALE GENOMIC DNA]</scope>
    <source>
        <strain>55989 / EAEC</strain>
    </source>
</reference>
<feature type="chain" id="PRO_1000194507" description="Ion-translocating oxidoreductase complex subunit C">
    <location>
        <begin position="1"/>
        <end position="708"/>
    </location>
</feature>
<feature type="domain" description="4Fe-4S ferredoxin-type 1" evidence="1">
    <location>
        <begin position="369"/>
        <end position="397"/>
    </location>
</feature>
<feature type="domain" description="4Fe-4S ferredoxin-type 2" evidence="1">
    <location>
        <begin position="407"/>
        <end position="436"/>
    </location>
</feature>
<feature type="region of interest" description="Disordered" evidence="2">
    <location>
        <begin position="599"/>
        <end position="686"/>
    </location>
</feature>
<feature type="binding site" evidence="1">
    <location>
        <position position="377"/>
    </location>
    <ligand>
        <name>[4Fe-4S] cluster</name>
        <dbReference type="ChEBI" id="CHEBI:49883"/>
        <label>1</label>
    </ligand>
</feature>
<feature type="binding site" evidence="1">
    <location>
        <position position="380"/>
    </location>
    <ligand>
        <name>[4Fe-4S] cluster</name>
        <dbReference type="ChEBI" id="CHEBI:49883"/>
        <label>1</label>
    </ligand>
</feature>
<feature type="binding site" evidence="1">
    <location>
        <position position="383"/>
    </location>
    <ligand>
        <name>[4Fe-4S] cluster</name>
        <dbReference type="ChEBI" id="CHEBI:49883"/>
        <label>1</label>
    </ligand>
</feature>
<feature type="binding site" evidence="1">
    <location>
        <position position="387"/>
    </location>
    <ligand>
        <name>[4Fe-4S] cluster</name>
        <dbReference type="ChEBI" id="CHEBI:49883"/>
        <label>2</label>
    </ligand>
</feature>
<feature type="binding site" evidence="1">
    <location>
        <position position="416"/>
    </location>
    <ligand>
        <name>[4Fe-4S] cluster</name>
        <dbReference type="ChEBI" id="CHEBI:49883"/>
        <label>2</label>
    </ligand>
</feature>
<feature type="binding site" evidence="1">
    <location>
        <position position="419"/>
    </location>
    <ligand>
        <name>[4Fe-4S] cluster</name>
        <dbReference type="ChEBI" id="CHEBI:49883"/>
        <label>2</label>
    </ligand>
</feature>
<feature type="binding site" evidence="1">
    <location>
        <position position="422"/>
    </location>
    <ligand>
        <name>[4Fe-4S] cluster</name>
        <dbReference type="ChEBI" id="CHEBI:49883"/>
        <label>2</label>
    </ligand>
</feature>
<feature type="binding site" evidence="1">
    <location>
        <position position="426"/>
    </location>
    <ligand>
        <name>[4Fe-4S] cluster</name>
        <dbReference type="ChEBI" id="CHEBI:49883"/>
        <label>1</label>
    </ligand>
</feature>
<comment type="function">
    <text evidence="1">Part of a membrane-bound complex that couples electron transfer with translocation of ions across the membrane. Required to maintain the reduced state of SoxR.</text>
</comment>
<comment type="cofactor">
    <cofactor evidence="1">
        <name>[4Fe-4S] cluster</name>
        <dbReference type="ChEBI" id="CHEBI:49883"/>
    </cofactor>
    <text evidence="1">Binds 2 [4Fe-4S] clusters per subunit.</text>
</comment>
<comment type="subunit">
    <text evidence="1">The complex is composed of six subunits: RsxA, RsxB, RsxC, RsxD, RsxE and RsxG.</text>
</comment>
<comment type="subcellular location">
    <subcellularLocation>
        <location evidence="1">Cell inner membrane</location>
        <topology evidence="1">Peripheral membrane protein</topology>
    </subcellularLocation>
</comment>
<comment type="similarity">
    <text evidence="1">Belongs to the 4Fe4S bacterial-type ferredoxin family. RnfC subfamily.</text>
</comment>
<keyword id="KW-0004">4Fe-4S</keyword>
<keyword id="KW-0997">Cell inner membrane</keyword>
<keyword id="KW-1003">Cell membrane</keyword>
<keyword id="KW-0249">Electron transport</keyword>
<keyword id="KW-0408">Iron</keyword>
<keyword id="KW-0411">Iron-sulfur</keyword>
<keyword id="KW-0472">Membrane</keyword>
<keyword id="KW-0479">Metal-binding</keyword>
<keyword id="KW-1185">Reference proteome</keyword>
<keyword id="KW-0677">Repeat</keyword>
<keyword id="KW-1278">Translocase</keyword>
<keyword id="KW-0813">Transport</keyword>